<gene>
    <name evidence="3 12" type="primary">Atp5f1b</name>
    <name type="synonym">Atp5b</name>
</gene>
<feature type="transit peptide" description="Mitochondrion" evidence="2">
    <location>
        <begin position="1"/>
        <end position="46"/>
    </location>
</feature>
<feature type="chain" id="PRO_0000002444" description="ATP synthase F(1) complex catalytic subunit beta, mitochondrial">
    <location>
        <begin position="47"/>
        <end position="529"/>
    </location>
</feature>
<feature type="binding site" evidence="2">
    <location>
        <position position="209"/>
    </location>
    <ligand>
        <name>ADP</name>
        <dbReference type="ChEBI" id="CHEBI:456216"/>
    </ligand>
</feature>
<feature type="binding site" evidence="2">
    <location>
        <position position="209"/>
    </location>
    <ligand>
        <name>ATP</name>
        <dbReference type="ChEBI" id="CHEBI:30616"/>
    </ligand>
</feature>
<feature type="binding site" evidence="2">
    <location>
        <position position="209"/>
    </location>
    <ligand>
        <name>phosphate</name>
        <dbReference type="ChEBI" id="CHEBI:43474"/>
    </ligand>
</feature>
<feature type="binding site" evidence="2">
    <location>
        <position position="210"/>
    </location>
    <ligand>
        <name>ADP</name>
        <dbReference type="ChEBI" id="CHEBI:456216"/>
    </ligand>
</feature>
<feature type="binding site" evidence="2">
    <location>
        <position position="210"/>
    </location>
    <ligand>
        <name>phosphate</name>
        <dbReference type="ChEBI" id="CHEBI:43474"/>
    </ligand>
</feature>
<feature type="binding site" evidence="2">
    <location>
        <position position="211"/>
    </location>
    <ligand>
        <name>ADP</name>
        <dbReference type="ChEBI" id="CHEBI:456216"/>
    </ligand>
</feature>
<feature type="binding site" evidence="2">
    <location>
        <position position="211"/>
    </location>
    <ligand>
        <name>ATP</name>
        <dbReference type="ChEBI" id="CHEBI:30616"/>
    </ligand>
</feature>
<feature type="binding site" evidence="2">
    <location>
        <position position="211"/>
    </location>
    <ligand>
        <name>phosphate</name>
        <dbReference type="ChEBI" id="CHEBI:43474"/>
    </ligand>
</feature>
<feature type="binding site" evidence="2">
    <location>
        <position position="212"/>
    </location>
    <ligand>
        <name>ADP</name>
        <dbReference type="ChEBI" id="CHEBI:456216"/>
    </ligand>
</feature>
<feature type="binding site" evidence="2">
    <location>
        <position position="212"/>
    </location>
    <ligand>
        <name>ATP</name>
        <dbReference type="ChEBI" id="CHEBI:30616"/>
    </ligand>
</feature>
<feature type="binding site" evidence="2">
    <location>
        <position position="212"/>
    </location>
    <ligand>
        <name>phosphate</name>
        <dbReference type="ChEBI" id="CHEBI:43474"/>
    </ligand>
</feature>
<feature type="binding site" evidence="2">
    <location>
        <position position="213"/>
    </location>
    <ligand>
        <name>ADP</name>
        <dbReference type="ChEBI" id="CHEBI:456216"/>
    </ligand>
</feature>
<feature type="binding site" evidence="2">
    <location>
        <position position="213"/>
    </location>
    <ligand>
        <name>ATP</name>
        <dbReference type="ChEBI" id="CHEBI:30616"/>
    </ligand>
</feature>
<feature type="binding site" evidence="2">
    <location>
        <position position="213"/>
    </location>
    <ligand>
        <name>Mg(2+)</name>
        <dbReference type="ChEBI" id="CHEBI:18420"/>
        <label>1</label>
        <note>ligand shared between two neighboring subunits</note>
    </ligand>
</feature>
<feature type="binding site" evidence="2">
    <location>
        <position position="213"/>
    </location>
    <ligand>
        <name>phosphate</name>
        <dbReference type="ChEBI" id="CHEBI:43474"/>
    </ligand>
</feature>
<feature type="binding site" evidence="2">
    <location>
        <position position="214"/>
    </location>
    <ligand>
        <name>ADP</name>
        <dbReference type="ChEBI" id="CHEBI:456216"/>
    </ligand>
</feature>
<feature type="binding site" evidence="2">
    <location>
        <position position="214"/>
    </location>
    <ligand>
        <name>ATP</name>
        <dbReference type="ChEBI" id="CHEBI:30616"/>
    </ligand>
</feature>
<feature type="binding site" evidence="2">
    <location>
        <position position="238"/>
    </location>
    <ligand>
        <name>Mg(2+)</name>
        <dbReference type="ChEBI" id="CHEBI:18420"/>
        <label>2</label>
        <note>ligand shared between two neighboring subunits</note>
    </ligand>
</feature>
<feature type="binding site" evidence="2">
    <location>
        <position position="239"/>
    </location>
    <ligand>
        <name>ATP</name>
        <dbReference type="ChEBI" id="CHEBI:30616"/>
    </ligand>
</feature>
<feature type="modified residue" description="N6-acetyllysine; alternate" evidence="15">
    <location>
        <position position="124"/>
    </location>
</feature>
<feature type="modified residue" description="N6-succinyllysine; alternate" evidence="16">
    <location>
        <position position="124"/>
    </location>
</feature>
<feature type="modified residue" description="N6-acetyllysine; alternate" evidence="15">
    <location>
        <position position="133"/>
    </location>
</feature>
<feature type="modified residue" description="N6-succinyllysine; alternate" evidence="16">
    <location>
        <position position="133"/>
    </location>
</feature>
<feature type="modified residue" description="N6-acetyllysine; alternate" evidence="15">
    <location>
        <position position="161"/>
    </location>
</feature>
<feature type="modified residue" description="N6-succinyllysine; alternate" evidence="16">
    <location>
        <position position="161"/>
    </location>
</feature>
<feature type="modified residue" description="N6-acetyllysine" evidence="15">
    <location>
        <position position="198"/>
    </location>
</feature>
<feature type="modified residue" description="N6-acetyllysine; alternate" evidence="15">
    <location>
        <position position="259"/>
    </location>
</feature>
<feature type="modified residue" description="N6-succinyllysine; alternate" evidence="16">
    <location>
        <position position="259"/>
    </location>
</feature>
<feature type="modified residue" description="N6-acetyllysine; alternate" evidence="15">
    <location>
        <position position="264"/>
    </location>
</feature>
<feature type="modified residue" description="N6-succinyllysine; alternate" evidence="16">
    <location>
        <position position="264"/>
    </location>
</feature>
<feature type="modified residue" description="Phosphothreonine" evidence="14">
    <location>
        <position position="312"/>
    </location>
</feature>
<feature type="modified residue" description="N6-acetyllysine" evidence="15">
    <location>
        <position position="426"/>
    </location>
</feature>
<feature type="modified residue" description="Phosphoserine" evidence="4">
    <location>
        <position position="433"/>
    </location>
</feature>
<feature type="modified residue" description="N6-acetyllysine" evidence="15">
    <location>
        <position position="480"/>
    </location>
</feature>
<feature type="modified residue" description="N6-acetyllysine" evidence="15">
    <location>
        <position position="485"/>
    </location>
</feature>
<feature type="modified residue" description="N6-acetyllysine; alternate" evidence="15 16">
    <location>
        <position position="522"/>
    </location>
</feature>
<feature type="modified residue" description="N6-succinyllysine; alternate" evidence="16">
    <location>
        <position position="522"/>
    </location>
</feature>
<feature type="modified residue" description="Phosphoserine" evidence="13">
    <location>
        <position position="529"/>
    </location>
</feature>
<feature type="glycosylation site" description="O-linked (GlcNAc) serine" evidence="1">
    <location>
        <position position="106"/>
    </location>
</feature>
<feature type="sequence conflict" description="In Ref. 1; AAB86421." evidence="9" ref="1">
    <original>A</original>
    <variation>V</variation>
    <location>
        <position position="25"/>
    </location>
</feature>
<feature type="sequence conflict" description="In Ref. 2; BAE35088." evidence="9" ref="2">
    <original>A</original>
    <variation>V</variation>
    <location>
        <position position="43"/>
    </location>
</feature>
<feature type="sequence conflict" description="In Ref. 2; BAE40961." evidence="9" ref="2">
    <original>D</original>
    <variation>G</variation>
    <location>
        <position position="76"/>
    </location>
</feature>
<feature type="sequence conflict" description="In Ref. 1; AAB86421." evidence="9" ref="1">
    <original>D</original>
    <variation>E</variation>
    <location>
        <position position="92"/>
    </location>
</feature>
<feature type="sequence conflict" description="In Ref. 2; BAE31497." evidence="9" ref="2">
    <original>I</original>
    <variation>V</variation>
    <location>
        <position position="134"/>
    </location>
</feature>
<feature type="sequence conflict" description="In Ref. 1; AAB86421." evidence="9" ref="1">
    <original>R</original>
    <variation>K</variation>
    <location>
        <position position="239"/>
    </location>
</feature>
<feature type="sequence conflict" description="In Ref. 2; BAE38888/BAE39301." evidence="9" ref="2">
    <original>Q</original>
    <variation>R</variation>
    <location>
        <position position="271"/>
    </location>
</feature>
<feature type="sequence conflict" description="In Ref. 1; AAB86421." evidence="9" ref="1">
    <original>RA</original>
    <variation>PT</variation>
    <location>
        <begin position="279"/>
        <end position="280"/>
    </location>
</feature>
<feature type="sequence conflict" description="In Ref. 2; BAE31497/BAE31630." evidence="9" ref="2">
    <original>T</original>
    <variation>A</variation>
    <location>
        <position position="288"/>
    </location>
</feature>
<feature type="sequence conflict" description="In Ref. 2; BAE30095." evidence="9" ref="2">
    <original>T</original>
    <variation>N</variation>
    <location>
        <position position="375"/>
    </location>
</feature>
<feature type="sequence conflict" description="In Ref. 2; BAB22802." evidence="9" ref="2">
    <original>T</original>
    <variation>S</variation>
    <location>
        <position position="383"/>
    </location>
</feature>
<feature type="sequence conflict" description="In Ref. 1; AAB86421." evidence="9" ref="1">
    <original>SL</original>
    <variation>FF</variation>
    <location>
        <begin position="433"/>
        <end position="434"/>
    </location>
</feature>
<feature type="sequence conflict" description="In Ref. 2; BAB22802." evidence="9" ref="2">
    <original>Q</original>
    <variation>H</variation>
    <location>
        <position position="466"/>
    </location>
</feature>
<feature type="sequence conflict" description="In Ref. 2; BAE39797." evidence="9" ref="2">
    <original>Q</original>
    <variation>R</variation>
    <location>
        <position position="469"/>
    </location>
</feature>
<feature type="sequence conflict" description="In Ref. 2; BAE35331." evidence="9" ref="2">
    <original>A</original>
    <variation>V</variation>
    <location>
        <position position="518"/>
    </location>
</feature>
<comment type="function">
    <text evidence="3 5 8 10">Catalytic subunit beta, of the mitochondrial membrane ATP synthase complex (F(1)F(0) ATP synthase or Complex V) that produces ATP from ADP in the presence of a proton gradient across the membrane which is generated by electron transport complexes of the respiratory chain (Probable) (PubMed:21281446). ATP synthase complex consist of a soluble F(1) head domain - the catalytic core - and a membrane F(1) domain - the membrane proton channel. These two domains are linked by a central stalk rotating inside the F(1) region and a stationary peripheral stalk. During catalysis, ATP synthesis in the catalytic domain of F(1) is coupled via a rotary mechanism of the central stalk subunits to proton translocation (By similarity). In vivo, can only synthesize ATP although its ATP hydrolase activity can be activated artificially in vitro (By similarity). With the subunit alpha (ATP5F1A), forms the catalytic core in the F(1) domain (By similarity).</text>
</comment>
<comment type="catalytic activity">
    <reaction evidence="8">
        <text>ATP + H2O + 4 H(+)(in) = ADP + phosphate + 5 H(+)(out)</text>
        <dbReference type="Rhea" id="RHEA:57720"/>
        <dbReference type="ChEBI" id="CHEBI:15377"/>
        <dbReference type="ChEBI" id="CHEBI:15378"/>
        <dbReference type="ChEBI" id="CHEBI:30616"/>
        <dbReference type="ChEBI" id="CHEBI:43474"/>
        <dbReference type="ChEBI" id="CHEBI:456216"/>
        <dbReference type="EC" id="7.1.2.2"/>
    </reaction>
    <physiologicalReaction direction="right-to-left" evidence="11">
        <dbReference type="Rhea" id="RHEA:57722"/>
    </physiologicalReaction>
</comment>
<comment type="subunit">
    <text evidence="3 4 6 7 8">Homotrimer. Component of the ATP synthase complex composed at least of ATP5F1A/subunit alpha, ATP5F1B/subunit beta, ATP5MC1/subunit c (homooctomer), MT-ATP6/subunit a, MT-ATP8/subunit 8, ATP5ME/subunit e, ATP5MF/subunit f, ATP5MG/subunit g, ATP5MK/subunit k, ATP5MJ/subunit j, ATP5F1C/subunit gamma, ATP5F1D/subunit delta, ATP5F1E/subunit epsilon, ATP5PF/subunit F6, ATP5PB/subunit b, ATP5PD/subunit d, ATP5PO/subunit OSCP. ATP synthase complex consists of a soluble F(1) head domain (subunits alpha(3) and beta(3)) - the catalytic core - and a membrane F(0) domain - the membrane proton channel (subunits c, a, 8, e, f, g, k and j). These two domains are linked by a central stalk (subunits gamma, delta, and epsilon) rotating inside the F1 region and a stationary peripheral stalk (subunits F6, b, d, and OSCP) (By similarity). Interacts with PPIF (PubMed:21281446). Interacts with BCL2L1 isoform BCL-X(L); the interaction mediates the association of BCL2L1 isoform BCL-X(L) with the mitochondrial membrane F(1)F(0) ATP synthase and enhances neurons metabolic efficiency (By similarity). Interacts with CLN5 and PPT1 (PubMed:19941651). Interacts with S100A1; this interaction increases F1-ATPase activity (PubMed:17438143). Interacts with MTLN. Interacts with TTC5/STRAP; the interaction results in decreased mitochondrial ATP production (By similarity).</text>
</comment>
<comment type="subcellular location">
    <subcellularLocation>
        <location evidence="6">Mitochondrion inner membrane</location>
        <topology evidence="6">Peripheral membrane protein</topology>
        <orientation evidence="2">Matrix side</orientation>
    </subcellularLocation>
</comment>
<comment type="PTM">
    <text>Acetylation of Lys-133 is observed in liver mitochondria from fasted mice but not from fed mice.</text>
</comment>
<comment type="similarity">
    <text evidence="9">Belongs to the ATPase alpha/beta chains family.</text>
</comment>
<comment type="sequence caution" evidence="9">
    <conflict type="erroneous initiation">
        <sequence resource="EMBL-CDS" id="AAH37127"/>
    </conflict>
    <text>Extended N-terminus.</text>
</comment>
<proteinExistence type="evidence at protein level"/>
<reference key="1">
    <citation type="journal article" date="2000" name="Biochem. J.">
        <title>A novel principle for conferring selectivity to poly(A)-binding proteins: interdependence of two ATP synthase beta-subunit mRNA-binding proteins.</title>
        <authorList>
            <person name="Andersson U."/>
            <person name="Antonicka H."/>
            <person name="Houstek J."/>
            <person name="Cannon B."/>
        </authorList>
    </citation>
    <scope>NUCLEOTIDE SEQUENCE [MRNA]</scope>
    <source>
        <strain>BALB/cJ</strain>
        <tissue>Liver</tissue>
    </source>
</reference>
<reference key="2">
    <citation type="journal article" date="2005" name="Science">
        <title>The transcriptional landscape of the mammalian genome.</title>
        <authorList>
            <person name="Carninci P."/>
            <person name="Kasukawa T."/>
            <person name="Katayama S."/>
            <person name="Gough J."/>
            <person name="Frith M.C."/>
            <person name="Maeda N."/>
            <person name="Oyama R."/>
            <person name="Ravasi T."/>
            <person name="Lenhard B."/>
            <person name="Wells C."/>
            <person name="Kodzius R."/>
            <person name="Shimokawa K."/>
            <person name="Bajic V.B."/>
            <person name="Brenner S.E."/>
            <person name="Batalov S."/>
            <person name="Forrest A.R."/>
            <person name="Zavolan M."/>
            <person name="Davis M.J."/>
            <person name="Wilming L.G."/>
            <person name="Aidinis V."/>
            <person name="Allen J.E."/>
            <person name="Ambesi-Impiombato A."/>
            <person name="Apweiler R."/>
            <person name="Aturaliya R.N."/>
            <person name="Bailey T.L."/>
            <person name="Bansal M."/>
            <person name="Baxter L."/>
            <person name="Beisel K.W."/>
            <person name="Bersano T."/>
            <person name="Bono H."/>
            <person name="Chalk A.M."/>
            <person name="Chiu K.P."/>
            <person name="Choudhary V."/>
            <person name="Christoffels A."/>
            <person name="Clutterbuck D.R."/>
            <person name="Crowe M.L."/>
            <person name="Dalla E."/>
            <person name="Dalrymple B.P."/>
            <person name="de Bono B."/>
            <person name="Della Gatta G."/>
            <person name="di Bernardo D."/>
            <person name="Down T."/>
            <person name="Engstrom P."/>
            <person name="Fagiolini M."/>
            <person name="Faulkner G."/>
            <person name="Fletcher C.F."/>
            <person name="Fukushima T."/>
            <person name="Furuno M."/>
            <person name="Futaki S."/>
            <person name="Gariboldi M."/>
            <person name="Georgii-Hemming P."/>
            <person name="Gingeras T.R."/>
            <person name="Gojobori T."/>
            <person name="Green R.E."/>
            <person name="Gustincich S."/>
            <person name="Harbers M."/>
            <person name="Hayashi Y."/>
            <person name="Hensch T.K."/>
            <person name="Hirokawa N."/>
            <person name="Hill D."/>
            <person name="Huminiecki L."/>
            <person name="Iacono M."/>
            <person name="Ikeo K."/>
            <person name="Iwama A."/>
            <person name="Ishikawa T."/>
            <person name="Jakt M."/>
            <person name="Kanapin A."/>
            <person name="Katoh M."/>
            <person name="Kawasawa Y."/>
            <person name="Kelso J."/>
            <person name="Kitamura H."/>
            <person name="Kitano H."/>
            <person name="Kollias G."/>
            <person name="Krishnan S.P."/>
            <person name="Kruger A."/>
            <person name="Kummerfeld S.K."/>
            <person name="Kurochkin I.V."/>
            <person name="Lareau L.F."/>
            <person name="Lazarevic D."/>
            <person name="Lipovich L."/>
            <person name="Liu J."/>
            <person name="Liuni S."/>
            <person name="McWilliam S."/>
            <person name="Madan Babu M."/>
            <person name="Madera M."/>
            <person name="Marchionni L."/>
            <person name="Matsuda H."/>
            <person name="Matsuzawa S."/>
            <person name="Miki H."/>
            <person name="Mignone F."/>
            <person name="Miyake S."/>
            <person name="Morris K."/>
            <person name="Mottagui-Tabar S."/>
            <person name="Mulder N."/>
            <person name="Nakano N."/>
            <person name="Nakauchi H."/>
            <person name="Ng P."/>
            <person name="Nilsson R."/>
            <person name="Nishiguchi S."/>
            <person name="Nishikawa S."/>
            <person name="Nori F."/>
            <person name="Ohara O."/>
            <person name="Okazaki Y."/>
            <person name="Orlando V."/>
            <person name="Pang K.C."/>
            <person name="Pavan W.J."/>
            <person name="Pavesi G."/>
            <person name="Pesole G."/>
            <person name="Petrovsky N."/>
            <person name="Piazza S."/>
            <person name="Reed J."/>
            <person name="Reid J.F."/>
            <person name="Ring B.Z."/>
            <person name="Ringwald M."/>
            <person name="Rost B."/>
            <person name="Ruan Y."/>
            <person name="Salzberg S.L."/>
            <person name="Sandelin A."/>
            <person name="Schneider C."/>
            <person name="Schoenbach C."/>
            <person name="Sekiguchi K."/>
            <person name="Semple C.A."/>
            <person name="Seno S."/>
            <person name="Sessa L."/>
            <person name="Sheng Y."/>
            <person name="Shibata Y."/>
            <person name="Shimada H."/>
            <person name="Shimada K."/>
            <person name="Silva D."/>
            <person name="Sinclair B."/>
            <person name="Sperling S."/>
            <person name="Stupka E."/>
            <person name="Sugiura K."/>
            <person name="Sultana R."/>
            <person name="Takenaka Y."/>
            <person name="Taki K."/>
            <person name="Tammoja K."/>
            <person name="Tan S.L."/>
            <person name="Tang S."/>
            <person name="Taylor M.S."/>
            <person name="Tegner J."/>
            <person name="Teichmann S.A."/>
            <person name="Ueda H.R."/>
            <person name="van Nimwegen E."/>
            <person name="Verardo R."/>
            <person name="Wei C.L."/>
            <person name="Yagi K."/>
            <person name="Yamanishi H."/>
            <person name="Zabarovsky E."/>
            <person name="Zhu S."/>
            <person name="Zimmer A."/>
            <person name="Hide W."/>
            <person name="Bult C."/>
            <person name="Grimmond S.M."/>
            <person name="Teasdale R.D."/>
            <person name="Liu E.T."/>
            <person name="Brusic V."/>
            <person name="Quackenbush J."/>
            <person name="Wahlestedt C."/>
            <person name="Mattick J.S."/>
            <person name="Hume D.A."/>
            <person name="Kai C."/>
            <person name="Sasaki D."/>
            <person name="Tomaru Y."/>
            <person name="Fukuda S."/>
            <person name="Kanamori-Katayama M."/>
            <person name="Suzuki M."/>
            <person name="Aoki J."/>
            <person name="Arakawa T."/>
            <person name="Iida J."/>
            <person name="Imamura K."/>
            <person name="Itoh M."/>
            <person name="Kato T."/>
            <person name="Kawaji H."/>
            <person name="Kawagashira N."/>
            <person name="Kawashima T."/>
            <person name="Kojima M."/>
            <person name="Kondo S."/>
            <person name="Konno H."/>
            <person name="Nakano K."/>
            <person name="Ninomiya N."/>
            <person name="Nishio T."/>
            <person name="Okada M."/>
            <person name="Plessy C."/>
            <person name="Shibata K."/>
            <person name="Shiraki T."/>
            <person name="Suzuki S."/>
            <person name="Tagami M."/>
            <person name="Waki K."/>
            <person name="Watahiki A."/>
            <person name="Okamura-Oho Y."/>
            <person name="Suzuki H."/>
            <person name="Kawai J."/>
            <person name="Hayashizaki Y."/>
        </authorList>
    </citation>
    <scope>NUCLEOTIDE SEQUENCE [LARGE SCALE MRNA]</scope>
    <source>
        <strain>BALB/cJ</strain>
        <strain>C57BL/6J</strain>
        <tissue>Amnion</tissue>
        <tissue>Bone marrow</tissue>
        <tissue>Embryonic stem cell</tissue>
        <tissue>Heart</tissue>
        <tissue>Kidney</tissue>
        <tissue>Liver</tissue>
        <tissue>Spinal ganglion</tissue>
        <tissue>Sympathetic ganglion</tissue>
    </source>
</reference>
<reference key="3">
    <citation type="journal article" date="2004" name="Genome Res.">
        <title>The status, quality, and expansion of the NIH full-length cDNA project: the Mammalian Gene Collection (MGC).</title>
        <authorList>
            <consortium name="The MGC Project Team"/>
        </authorList>
    </citation>
    <scope>NUCLEOTIDE SEQUENCE [LARGE SCALE MRNA]</scope>
    <source>
        <strain>Czech II</strain>
        <strain>FVB/N</strain>
        <tissue>Mammary tumor</tissue>
        <tissue>Retina</tissue>
        <tissue>Salivary gland</tissue>
    </source>
</reference>
<reference key="4">
    <citation type="journal article" date="2006" name="Mol. Biol. Evol.">
        <title>Housekeeping genes for phylogenetic analysis of eutherian relationships.</title>
        <authorList>
            <person name="Kullberg M."/>
            <person name="Nilsson M.A."/>
            <person name="Arnason U."/>
            <person name="Harley E.H."/>
            <person name="Janke A."/>
        </authorList>
    </citation>
    <scope>NUCLEOTIDE SEQUENCE [MRNA] OF 65-509</scope>
    <source>
        <tissue>Liver</tissue>
    </source>
</reference>
<reference key="5">
    <citation type="submission" date="2007-07" db="UniProtKB">
        <authorList>
            <person name="Lubec G."/>
            <person name="Kang S.U."/>
            <person name="Klug S."/>
            <person name="Yang J.W."/>
            <person name="Zigmond M."/>
        </authorList>
    </citation>
    <scope>PROTEIN SEQUENCE OF 95-121; 125-155; 162-198; 202-239; 242-259; 265-279; 282-345; 352-422; 433-456 AND 463-489</scope>
    <scope>IDENTIFICATION BY MASS SPECTROMETRY</scope>
    <source>
        <strain>C57BL/6J</strain>
        <tissue>Brain</tissue>
        <tissue>Hippocampus</tissue>
    </source>
</reference>
<reference key="6">
    <citation type="journal article" date="2007" name="Mol. Cell. Proteomics">
        <title>Mitochondrial phosphoproteome revealed by an improved IMAC method and MS/MS/MS.</title>
        <authorList>
            <person name="Lee J."/>
            <person name="Xu Y."/>
            <person name="Chen Y."/>
            <person name="Sprung R."/>
            <person name="Kim S.C."/>
            <person name="Xie S."/>
            <person name="Zhao Y."/>
        </authorList>
    </citation>
    <scope>PHOSPHORYLATION [LARGE SCALE ANALYSIS] AT SER-529</scope>
    <scope>IDENTIFICATION BY MASS SPECTROMETRY [LARGE SCALE ANALYSIS]</scope>
    <source>
        <tissue>Liver</tissue>
    </source>
</reference>
<reference key="7">
    <citation type="journal article" date="2007" name="Mol. Cell. Biol.">
        <title>Ca2+ -dependent interaction of S100A1 with F1-ATPase leads to an increased ATP content in cardiomyocytes.</title>
        <authorList>
            <person name="Boerries M."/>
            <person name="Most P."/>
            <person name="Gledhill J.R."/>
            <person name="Walker J.E."/>
            <person name="Katus H.A."/>
            <person name="Koch W.J."/>
            <person name="Aebi U."/>
            <person name="Schoenenberger C.A."/>
        </authorList>
    </citation>
    <scope>SUBCELLULAR LOCATION</scope>
    <scope>INTERACTION WITH S100A1</scope>
    <scope>FUNCTION</scope>
</reference>
<reference key="8">
    <citation type="journal article" date="2009" name="BMC Cell Biol.">
        <title>Novel interactions of CLN5 support molecular networking between neuronal ceroid lipofuscinosis proteins.</title>
        <authorList>
            <person name="Lyly A."/>
            <person name="von Schantz C."/>
            <person name="Heine C."/>
            <person name="Schmiedt M.L."/>
            <person name="Sipilae T."/>
            <person name="Jalanko A."/>
            <person name="Kyttaelae A."/>
        </authorList>
    </citation>
    <scope>INTERACTION WITH CLN5 AND PPT1</scope>
</reference>
<reference key="9">
    <citation type="journal article" date="2010" name="Cell">
        <title>A tissue-specific atlas of mouse protein phosphorylation and expression.</title>
        <authorList>
            <person name="Huttlin E.L."/>
            <person name="Jedrychowski M.P."/>
            <person name="Elias J.E."/>
            <person name="Goswami T."/>
            <person name="Rad R."/>
            <person name="Beausoleil S.A."/>
            <person name="Villen J."/>
            <person name="Haas W."/>
            <person name="Sowa M.E."/>
            <person name="Gygi S.P."/>
        </authorList>
    </citation>
    <scope>PHOSPHORYLATION [LARGE SCALE ANALYSIS] AT THR-312</scope>
    <scope>IDENTIFICATION BY MASS SPECTROMETRY [LARGE SCALE ANALYSIS]</scope>
    <source>
        <tissue>Brain</tissue>
        <tissue>Brown adipose tissue</tissue>
        <tissue>Heart</tissue>
        <tissue>Kidney</tissue>
        <tissue>Liver</tissue>
        <tissue>Lung</tissue>
        <tissue>Pancreas</tissue>
        <tissue>Spleen</tissue>
        <tissue>Testis</tissue>
    </source>
</reference>
<reference key="10">
    <citation type="journal article" date="2011" name="FEBS J.">
        <title>Modulation of F0F1-ATP synthase activity by cyclophilin D regulates matrix adenine nucleotide levels.</title>
        <authorList>
            <person name="Chinopoulos C."/>
            <person name="Konrad C."/>
            <person name="Kiss G."/>
            <person name="Metelkin E."/>
            <person name="Torocsik B."/>
            <person name="Zhang S.F."/>
            <person name="Starkov A.A."/>
        </authorList>
    </citation>
    <scope>INTERACTION WITH PPIF</scope>
    <scope>FUNCTION</scope>
    <scope>CATALYTIC ACTIVITY</scope>
</reference>
<reference key="11">
    <citation type="journal article" date="2013" name="Mol. Cell">
        <title>SIRT5-mediated lysine desuccinylation impacts diverse metabolic pathways.</title>
        <authorList>
            <person name="Park J."/>
            <person name="Chen Y."/>
            <person name="Tishkoff D.X."/>
            <person name="Peng C."/>
            <person name="Tan M."/>
            <person name="Dai L."/>
            <person name="Xie Z."/>
            <person name="Zhang Y."/>
            <person name="Zwaans B.M."/>
            <person name="Skinner M.E."/>
            <person name="Lombard D.B."/>
            <person name="Zhao Y."/>
        </authorList>
    </citation>
    <scope>ACETYLATION [LARGE SCALE ANALYSIS] AT LYS-522</scope>
    <scope>SUCCINYLATION [LARGE SCALE ANALYSIS] AT LYS-124; LYS-133; LYS-161; LYS-259; LYS-264 AND LYS-522</scope>
    <scope>IDENTIFICATION BY MASS SPECTROMETRY [LARGE SCALE ANALYSIS]</scope>
    <source>
        <tissue>Embryonic fibroblast</tissue>
        <tissue>Liver</tissue>
    </source>
</reference>
<reference key="12">
    <citation type="journal article" date="2013" name="Proc. Natl. Acad. Sci. U.S.A.">
        <title>Label-free quantitative proteomics of the lysine acetylome in mitochondria identifies substrates of SIRT3 in metabolic pathways.</title>
        <authorList>
            <person name="Rardin M.J."/>
            <person name="Newman J.C."/>
            <person name="Held J.M."/>
            <person name="Cusack M.P."/>
            <person name="Sorensen D.J."/>
            <person name="Li B."/>
            <person name="Schilling B."/>
            <person name="Mooney S.D."/>
            <person name="Kahn C.R."/>
            <person name="Verdin E."/>
            <person name="Gibson B.W."/>
        </authorList>
    </citation>
    <scope>ACETYLATION [LARGE SCALE ANALYSIS] AT LYS-124; LYS-133; LYS-161; LYS-198; LYS-259; LYS-264; LYS-426; LYS-480; LYS-485 AND LYS-522</scope>
    <scope>IDENTIFICATION BY MASS SPECTROMETRY [LARGE SCALE ANALYSIS]</scope>
    <source>
        <tissue>Liver</tissue>
    </source>
</reference>
<name>ATPB_MOUSE</name>
<accession>P56480</accession>
<accession>Q0QEP4</accession>
<accession>Q3TFD7</accession>
<accession>Q3TIP9</accession>
<accession>Q3TK44</accession>
<accession>Q3TWD5</accession>
<accession>Q3TX28</accession>
<accession>Q3U6U4</accession>
<accession>Q3U774</accession>
<accession>Q3UB69</accession>
<accession>Q3UF69</accession>
<accession>Q8CI65</accession>
<accession>Q8VEJ5</accession>
<accession>Q9CTI7</accession>
<accession>Q9CWX7</accession>
<evidence type="ECO:0000250" key="1"/>
<evidence type="ECO:0000250" key="2">
    <source>
        <dbReference type="UniProtKB" id="P00829"/>
    </source>
</evidence>
<evidence type="ECO:0000250" key="3">
    <source>
        <dbReference type="UniProtKB" id="P06576"/>
    </source>
</evidence>
<evidence type="ECO:0000250" key="4">
    <source>
        <dbReference type="UniProtKB" id="P10719"/>
    </source>
</evidence>
<evidence type="ECO:0000250" key="5">
    <source>
        <dbReference type="UniProtKB" id="P19483"/>
    </source>
</evidence>
<evidence type="ECO:0000269" key="6">
    <source>
    </source>
</evidence>
<evidence type="ECO:0000269" key="7">
    <source>
    </source>
</evidence>
<evidence type="ECO:0000269" key="8">
    <source>
    </source>
</evidence>
<evidence type="ECO:0000305" key="9"/>
<evidence type="ECO:0000305" key="10">
    <source>
    </source>
</evidence>
<evidence type="ECO:0000305" key="11">
    <source>
    </source>
</evidence>
<evidence type="ECO:0000312" key="12">
    <source>
        <dbReference type="MGI" id="MGI:107801"/>
    </source>
</evidence>
<evidence type="ECO:0007744" key="13">
    <source>
    </source>
</evidence>
<evidence type="ECO:0007744" key="14">
    <source>
    </source>
</evidence>
<evidence type="ECO:0007744" key="15">
    <source>
    </source>
</evidence>
<evidence type="ECO:0007744" key="16">
    <source>
    </source>
</evidence>
<sequence length="529" mass="56300">MLSLVGRVASASASGALRGLSPSAALPQAQLLLRAAPAGVHPARDYAAQASAAPKAGTATGRIVAVIGAVVDVQFDEGLPPILNALEVQGRDSRLVLEVAQHLGESTVRTIAMDGTEGLVRGQKVLDSGAPIKIPVGPETLGRIMNVIGEPIDERGPIKTKQFAPIHAEAPEFIEMSVEQEILVTGIKVVDLLAPYAKGGKIGLFGGAGVGKTVLIMELINNVAKAHGGYSVFAGVGERTREGNDLYHEMIESGVINLKDATSKVALVYGQMNEPPGARARVALTGLTVAEYFRDQEGQDVLLFIDNIFRFTQAGSEVSALLGRIPSAVGYQPTLATDMGTMQERITTTKKGSITSVQAIYVPADDLTDPAPATTFAHLDATTVLSRAIAELGIYPAVDPLDSTSRIMDPNIVGNEHYDVARGVQKILQDYKSLQDIIAILGMDELSEEDKLTVSRARKIQRFLSQPFQVAEVFTGHMGKLVPLKETIKGFQQILAGEYDHLPEQAFYMVGPIEEAVAKADKLAEEHGS</sequence>
<dbReference type="EC" id="7.1.2.2" evidence="8"/>
<dbReference type="EMBL" id="AF030559">
    <property type="protein sequence ID" value="AAB86421.1"/>
    <property type="molecule type" value="mRNA"/>
</dbReference>
<dbReference type="EMBL" id="AK003460">
    <property type="protein sequence ID" value="BAB22802.1"/>
    <property type="molecule type" value="mRNA"/>
</dbReference>
<dbReference type="EMBL" id="AK010314">
    <property type="protein sequence ID" value="BAB26846.1"/>
    <property type="molecule type" value="mRNA"/>
</dbReference>
<dbReference type="EMBL" id="AK084009">
    <property type="protein sequence ID" value="BAC39095.1"/>
    <property type="molecule type" value="mRNA"/>
</dbReference>
<dbReference type="EMBL" id="AK145684">
    <property type="protein sequence ID" value="BAE26587.1"/>
    <property type="molecule type" value="mRNA"/>
</dbReference>
<dbReference type="EMBL" id="AK148891">
    <property type="protein sequence ID" value="BAE28692.1"/>
    <property type="molecule type" value="mRNA"/>
</dbReference>
<dbReference type="EMBL" id="AK150599">
    <property type="protein sequence ID" value="BAE29691.1"/>
    <property type="molecule type" value="mRNA"/>
</dbReference>
<dbReference type="EMBL" id="AK151081">
    <property type="protein sequence ID" value="BAE30095.1"/>
    <property type="molecule type" value="mRNA"/>
</dbReference>
<dbReference type="EMBL" id="AK151600">
    <property type="protein sequence ID" value="BAE30540.1"/>
    <property type="molecule type" value="mRNA"/>
</dbReference>
<dbReference type="EMBL" id="AK152788">
    <property type="protein sequence ID" value="BAE31497.1"/>
    <property type="molecule type" value="mRNA"/>
</dbReference>
<dbReference type="EMBL" id="AK152976">
    <property type="protein sequence ID" value="BAE31630.1"/>
    <property type="molecule type" value="mRNA"/>
</dbReference>
<dbReference type="EMBL" id="AK153099">
    <property type="protein sequence ID" value="BAE31720.1"/>
    <property type="molecule type" value="mRNA"/>
</dbReference>
<dbReference type="EMBL" id="AK159444">
    <property type="protein sequence ID" value="BAE35088.1"/>
    <property type="molecule type" value="mRNA"/>
</dbReference>
<dbReference type="EMBL" id="AK159737">
    <property type="protein sequence ID" value="BAE35331.1"/>
    <property type="molecule type" value="mRNA"/>
</dbReference>
<dbReference type="EMBL" id="AK159978">
    <property type="protein sequence ID" value="BAE35529.1"/>
    <property type="molecule type" value="mRNA"/>
</dbReference>
<dbReference type="EMBL" id="AK160199">
    <property type="protein sequence ID" value="BAE35689.1"/>
    <property type="molecule type" value="mRNA"/>
</dbReference>
<dbReference type="EMBL" id="AK160608">
    <property type="protein sequence ID" value="BAE35911.1"/>
    <property type="molecule type" value="mRNA"/>
</dbReference>
<dbReference type="EMBL" id="AK164383">
    <property type="protein sequence ID" value="BAE37764.1"/>
    <property type="molecule type" value="mRNA"/>
</dbReference>
<dbReference type="EMBL" id="AK166525">
    <property type="protein sequence ID" value="BAE38829.1"/>
    <property type="molecule type" value="mRNA"/>
</dbReference>
<dbReference type="EMBL" id="AK166603">
    <property type="protein sequence ID" value="BAE38888.1"/>
    <property type="molecule type" value="mRNA"/>
</dbReference>
<dbReference type="EMBL" id="AK166979">
    <property type="protein sequence ID" value="BAE39161.1"/>
    <property type="molecule type" value="mRNA"/>
</dbReference>
<dbReference type="EMBL" id="AK167119">
    <property type="protein sequence ID" value="BAE39267.1"/>
    <property type="molecule type" value="mRNA"/>
</dbReference>
<dbReference type="EMBL" id="AK167160">
    <property type="protein sequence ID" value="BAE39301.1"/>
    <property type="molecule type" value="mRNA"/>
</dbReference>
<dbReference type="EMBL" id="AK167728">
    <property type="protein sequence ID" value="BAE39769.1"/>
    <property type="molecule type" value="mRNA"/>
</dbReference>
<dbReference type="EMBL" id="AK167764">
    <property type="protein sequence ID" value="BAE39797.1"/>
    <property type="molecule type" value="mRNA"/>
</dbReference>
<dbReference type="EMBL" id="AK168692">
    <property type="protein sequence ID" value="BAE40537.1"/>
    <property type="molecule type" value="mRNA"/>
</dbReference>
<dbReference type="EMBL" id="AK168941">
    <property type="protein sequence ID" value="BAE40749.1"/>
    <property type="molecule type" value="mRNA"/>
</dbReference>
<dbReference type="EMBL" id="AK169184">
    <property type="protein sequence ID" value="BAE40961.1"/>
    <property type="molecule type" value="mRNA"/>
</dbReference>
<dbReference type="EMBL" id="BC018392">
    <property type="protein sequence ID" value="AAH18392.1"/>
    <property type="molecule type" value="mRNA"/>
</dbReference>
<dbReference type="EMBL" id="BC037127">
    <property type="protein sequence ID" value="AAH37127.1"/>
    <property type="status" value="ALT_INIT"/>
    <property type="molecule type" value="mRNA"/>
</dbReference>
<dbReference type="EMBL" id="BC046616">
    <property type="protein sequence ID" value="AAH46616.1"/>
    <property type="molecule type" value="mRNA"/>
</dbReference>
<dbReference type="EMBL" id="DQ403100">
    <property type="protein sequence ID" value="ABD77233.1"/>
    <property type="molecule type" value="mRNA"/>
</dbReference>
<dbReference type="CCDS" id="CCDS24259.1"/>
<dbReference type="RefSeq" id="NP_058054.2">
    <property type="nucleotide sequence ID" value="NM_016774.3"/>
</dbReference>
<dbReference type="SMR" id="P56480"/>
<dbReference type="BioGRID" id="198254">
    <property type="interactions" value="103"/>
</dbReference>
<dbReference type="FunCoup" id="P56480">
    <property type="interactions" value="1639"/>
</dbReference>
<dbReference type="IntAct" id="P56480">
    <property type="interactions" value="37"/>
</dbReference>
<dbReference type="MINT" id="P56480"/>
<dbReference type="STRING" id="10090.ENSMUSP00000026459"/>
<dbReference type="CarbonylDB" id="P56480"/>
<dbReference type="GlyCosmos" id="P56480">
    <property type="glycosylation" value="1 site, No reported glycans"/>
</dbReference>
<dbReference type="GlyGen" id="P56480">
    <property type="glycosylation" value="4 sites, 1 O-linked glycan (3 sites)"/>
</dbReference>
<dbReference type="iPTMnet" id="P56480"/>
<dbReference type="MetOSite" id="P56480"/>
<dbReference type="PhosphoSitePlus" id="P56480"/>
<dbReference type="SwissPalm" id="P56480"/>
<dbReference type="REPRODUCTION-2DPAGE" id="IPI00468481"/>
<dbReference type="REPRODUCTION-2DPAGE" id="P56480"/>
<dbReference type="CPTAC" id="non-CPTAC-3766"/>
<dbReference type="jPOST" id="P56480"/>
<dbReference type="PaxDb" id="10090-ENSMUSP00000026459"/>
<dbReference type="PeptideAtlas" id="P56480"/>
<dbReference type="ProteomicsDB" id="277217"/>
<dbReference type="Pumba" id="P56480"/>
<dbReference type="TopDownProteomics" id="P56480"/>
<dbReference type="Antibodypedia" id="877">
    <property type="antibodies" value="565 antibodies from 36 providers"/>
</dbReference>
<dbReference type="DNASU" id="11947"/>
<dbReference type="Ensembl" id="ENSMUST00000026459.6">
    <property type="protein sequence ID" value="ENSMUSP00000026459.6"/>
    <property type="gene ID" value="ENSMUSG00000025393.13"/>
</dbReference>
<dbReference type="GeneID" id="11947"/>
<dbReference type="KEGG" id="mmu:11947"/>
<dbReference type="UCSC" id="uc007hle.1">
    <property type="organism name" value="mouse"/>
</dbReference>
<dbReference type="AGR" id="MGI:107801"/>
<dbReference type="CTD" id="506"/>
<dbReference type="MGI" id="MGI:107801">
    <property type="gene designation" value="Atp5f1b"/>
</dbReference>
<dbReference type="VEuPathDB" id="HostDB:ENSMUSG00000025393"/>
<dbReference type="eggNOG" id="KOG1350">
    <property type="taxonomic scope" value="Eukaryota"/>
</dbReference>
<dbReference type="GeneTree" id="ENSGT00550000074800"/>
<dbReference type="HOGENOM" id="CLU_022398_0_2_1"/>
<dbReference type="InParanoid" id="P56480"/>
<dbReference type="OMA" id="VRCIMLA"/>
<dbReference type="OrthoDB" id="14523at2759"/>
<dbReference type="PhylomeDB" id="P56480"/>
<dbReference type="TreeFam" id="TF105640"/>
<dbReference type="Reactome" id="R-MMU-1268020">
    <property type="pathway name" value="Mitochondrial protein import"/>
</dbReference>
<dbReference type="Reactome" id="R-MMU-163210">
    <property type="pathway name" value="Formation of ATP by chemiosmotic coupling"/>
</dbReference>
<dbReference type="Reactome" id="R-MMU-8949613">
    <property type="pathway name" value="Cristae formation"/>
</dbReference>
<dbReference type="Reactome" id="R-MMU-9837999">
    <property type="pathway name" value="Mitochondrial protein degradation"/>
</dbReference>
<dbReference type="BioGRID-ORCS" id="11947">
    <property type="hits" value="31 hits in 81 CRISPR screens"/>
</dbReference>
<dbReference type="CD-CODE" id="CE726F99">
    <property type="entry name" value="Postsynaptic density"/>
</dbReference>
<dbReference type="ChiTaRS" id="Atp5b">
    <property type="organism name" value="mouse"/>
</dbReference>
<dbReference type="PRO" id="PR:P56480"/>
<dbReference type="Proteomes" id="UP000000589">
    <property type="component" value="Chromosome 10"/>
</dbReference>
<dbReference type="RNAct" id="P56480">
    <property type="molecule type" value="protein"/>
</dbReference>
<dbReference type="Bgee" id="ENSMUSG00000025393">
    <property type="expression patterns" value="Expressed in right kidney and 266 other cell types or tissues"/>
</dbReference>
<dbReference type="GO" id="GO:0009986">
    <property type="term" value="C:cell surface"/>
    <property type="evidence" value="ECO:0007669"/>
    <property type="project" value="Ensembl"/>
</dbReference>
<dbReference type="GO" id="GO:0005743">
    <property type="term" value="C:mitochondrial inner membrane"/>
    <property type="evidence" value="ECO:0007005"/>
    <property type="project" value="MGI"/>
</dbReference>
<dbReference type="GO" id="GO:0042645">
    <property type="term" value="C:mitochondrial nucleoid"/>
    <property type="evidence" value="ECO:0007669"/>
    <property type="project" value="Ensembl"/>
</dbReference>
<dbReference type="GO" id="GO:0005739">
    <property type="term" value="C:mitochondrion"/>
    <property type="evidence" value="ECO:0000314"/>
    <property type="project" value="MGI"/>
</dbReference>
<dbReference type="GO" id="GO:0043209">
    <property type="term" value="C:myelin sheath"/>
    <property type="evidence" value="ECO:0007005"/>
    <property type="project" value="UniProtKB"/>
</dbReference>
<dbReference type="GO" id="GO:0005886">
    <property type="term" value="C:plasma membrane"/>
    <property type="evidence" value="ECO:0007669"/>
    <property type="project" value="Ensembl"/>
</dbReference>
<dbReference type="GO" id="GO:0045259">
    <property type="term" value="C:proton-transporting ATP synthase complex"/>
    <property type="evidence" value="ECO:0000250"/>
    <property type="project" value="UniProtKB"/>
</dbReference>
<dbReference type="GO" id="GO:0043532">
    <property type="term" value="F:angiostatin binding"/>
    <property type="evidence" value="ECO:0007669"/>
    <property type="project" value="Ensembl"/>
</dbReference>
<dbReference type="GO" id="GO:0005524">
    <property type="term" value="F:ATP binding"/>
    <property type="evidence" value="ECO:0007669"/>
    <property type="project" value="UniProtKB-KW"/>
</dbReference>
<dbReference type="GO" id="GO:0016887">
    <property type="term" value="F:ATP hydrolysis activity"/>
    <property type="evidence" value="ECO:0007669"/>
    <property type="project" value="InterPro"/>
</dbReference>
<dbReference type="GO" id="GO:0042288">
    <property type="term" value="F:MHC class I protein binding"/>
    <property type="evidence" value="ECO:0007669"/>
    <property type="project" value="Ensembl"/>
</dbReference>
<dbReference type="GO" id="GO:0046933">
    <property type="term" value="F:proton-transporting ATP synthase activity, rotational mechanism"/>
    <property type="evidence" value="ECO:0000314"/>
    <property type="project" value="UniProtKB"/>
</dbReference>
<dbReference type="GO" id="GO:0046961">
    <property type="term" value="F:proton-transporting ATPase activity, rotational mechanism"/>
    <property type="evidence" value="ECO:0007669"/>
    <property type="project" value="Ensembl"/>
</dbReference>
<dbReference type="GO" id="GO:0001525">
    <property type="term" value="P:angiogenesis"/>
    <property type="evidence" value="ECO:0007669"/>
    <property type="project" value="Ensembl"/>
</dbReference>
<dbReference type="GO" id="GO:0098761">
    <property type="term" value="P:cellular response to interleukin-7"/>
    <property type="evidence" value="ECO:0000314"/>
    <property type="project" value="MGI"/>
</dbReference>
<dbReference type="GO" id="GO:0006629">
    <property type="term" value="P:lipid metabolic process"/>
    <property type="evidence" value="ECO:0000315"/>
    <property type="project" value="MGI"/>
</dbReference>
<dbReference type="GO" id="GO:0006933">
    <property type="term" value="P:negative regulation of cell adhesion involved in substrate-bound cell migration"/>
    <property type="evidence" value="ECO:0000315"/>
    <property type="project" value="MGI"/>
</dbReference>
<dbReference type="GO" id="GO:0043536">
    <property type="term" value="P:positive regulation of blood vessel endothelial cell migration"/>
    <property type="evidence" value="ECO:0007669"/>
    <property type="project" value="Ensembl"/>
</dbReference>
<dbReference type="GO" id="GO:0015986">
    <property type="term" value="P:proton motive force-driven ATP synthesis"/>
    <property type="evidence" value="ECO:0000250"/>
    <property type="project" value="UniProtKB"/>
</dbReference>
<dbReference type="GO" id="GO:0042776">
    <property type="term" value="P:proton motive force-driven mitochondrial ATP synthesis"/>
    <property type="evidence" value="ECO:0007669"/>
    <property type="project" value="Ensembl"/>
</dbReference>
<dbReference type="GO" id="GO:0051453">
    <property type="term" value="P:regulation of intracellular pH"/>
    <property type="evidence" value="ECO:0007669"/>
    <property type="project" value="Ensembl"/>
</dbReference>
<dbReference type="CDD" id="cd18110">
    <property type="entry name" value="ATP-synt_F1_beta_C"/>
    <property type="match status" value="1"/>
</dbReference>
<dbReference type="CDD" id="cd18115">
    <property type="entry name" value="ATP-synt_F1_beta_N"/>
    <property type="match status" value="1"/>
</dbReference>
<dbReference type="CDD" id="cd01133">
    <property type="entry name" value="F1-ATPase_beta_CD"/>
    <property type="match status" value="1"/>
</dbReference>
<dbReference type="FunFam" id="1.10.1140.10:FF:000001">
    <property type="entry name" value="ATP synthase subunit beta"/>
    <property type="match status" value="1"/>
</dbReference>
<dbReference type="FunFam" id="2.40.10.170:FF:000004">
    <property type="entry name" value="ATP synthase subunit beta"/>
    <property type="match status" value="1"/>
</dbReference>
<dbReference type="FunFam" id="3.40.50.12240:FF:000006">
    <property type="entry name" value="ATP synthase subunit beta"/>
    <property type="match status" value="1"/>
</dbReference>
<dbReference type="FunFam" id="3.40.50.300:FF:000026">
    <property type="entry name" value="ATP synthase subunit beta"/>
    <property type="match status" value="1"/>
</dbReference>
<dbReference type="Gene3D" id="2.40.10.170">
    <property type="match status" value="1"/>
</dbReference>
<dbReference type="Gene3D" id="1.10.1140.10">
    <property type="entry name" value="Bovine Mitochondrial F1-atpase, Atp Synthase Beta Chain, Chain D, domain 3"/>
    <property type="match status" value="1"/>
</dbReference>
<dbReference type="Gene3D" id="3.40.50.300">
    <property type="entry name" value="P-loop containing nucleotide triphosphate hydrolases"/>
    <property type="match status" value="1"/>
</dbReference>
<dbReference type="HAMAP" id="MF_01347">
    <property type="entry name" value="ATP_synth_beta_bact"/>
    <property type="match status" value="1"/>
</dbReference>
<dbReference type="InterPro" id="IPR003593">
    <property type="entry name" value="AAA+_ATPase"/>
</dbReference>
<dbReference type="InterPro" id="IPR055190">
    <property type="entry name" value="ATP-synt_VA_C"/>
</dbReference>
<dbReference type="InterPro" id="IPR005722">
    <property type="entry name" value="ATP_synth_F1_bsu"/>
</dbReference>
<dbReference type="InterPro" id="IPR020003">
    <property type="entry name" value="ATPase_a/bsu_AS"/>
</dbReference>
<dbReference type="InterPro" id="IPR050053">
    <property type="entry name" value="ATPase_alpha/beta_chains"/>
</dbReference>
<dbReference type="InterPro" id="IPR004100">
    <property type="entry name" value="ATPase_F1/V1/A1_a/bsu_N"/>
</dbReference>
<dbReference type="InterPro" id="IPR036121">
    <property type="entry name" value="ATPase_F1/V1/A1_a/bsu_N_sf"/>
</dbReference>
<dbReference type="InterPro" id="IPR000194">
    <property type="entry name" value="ATPase_F1/V1/A1_a/bsu_nucl-bd"/>
</dbReference>
<dbReference type="InterPro" id="IPR024034">
    <property type="entry name" value="ATPase_F1/V1_b/a_C"/>
</dbReference>
<dbReference type="InterPro" id="IPR027417">
    <property type="entry name" value="P-loop_NTPase"/>
</dbReference>
<dbReference type="NCBIfam" id="TIGR01039">
    <property type="entry name" value="atpD"/>
    <property type="match status" value="1"/>
</dbReference>
<dbReference type="PANTHER" id="PTHR15184">
    <property type="entry name" value="ATP SYNTHASE"/>
    <property type="match status" value="1"/>
</dbReference>
<dbReference type="PANTHER" id="PTHR15184:SF71">
    <property type="entry name" value="ATP SYNTHASE SUBUNIT BETA, MITOCHONDRIAL"/>
    <property type="match status" value="1"/>
</dbReference>
<dbReference type="Pfam" id="PF00006">
    <property type="entry name" value="ATP-synt_ab"/>
    <property type="match status" value="1"/>
</dbReference>
<dbReference type="Pfam" id="PF02874">
    <property type="entry name" value="ATP-synt_ab_N"/>
    <property type="match status" value="1"/>
</dbReference>
<dbReference type="Pfam" id="PF22919">
    <property type="entry name" value="ATP-synt_VA_C"/>
    <property type="match status" value="1"/>
</dbReference>
<dbReference type="PIRSF" id="PIRSF039072">
    <property type="entry name" value="ATPase_subunit_beta"/>
    <property type="match status" value="1"/>
</dbReference>
<dbReference type="SMART" id="SM00382">
    <property type="entry name" value="AAA"/>
    <property type="match status" value="1"/>
</dbReference>
<dbReference type="SUPFAM" id="SSF47917">
    <property type="entry name" value="C-terminal domain of alpha and beta subunits of F1 ATP synthase"/>
    <property type="match status" value="1"/>
</dbReference>
<dbReference type="SUPFAM" id="SSF50615">
    <property type="entry name" value="N-terminal domain of alpha and beta subunits of F1 ATP synthase"/>
    <property type="match status" value="1"/>
</dbReference>
<dbReference type="SUPFAM" id="SSF52540">
    <property type="entry name" value="P-loop containing nucleoside triphosphate hydrolases"/>
    <property type="match status" value="1"/>
</dbReference>
<dbReference type="PROSITE" id="PS00152">
    <property type="entry name" value="ATPASE_ALPHA_BETA"/>
    <property type="match status" value="1"/>
</dbReference>
<organism>
    <name type="scientific">Mus musculus</name>
    <name type="common">Mouse</name>
    <dbReference type="NCBI Taxonomy" id="10090"/>
    <lineage>
        <taxon>Eukaryota</taxon>
        <taxon>Metazoa</taxon>
        <taxon>Chordata</taxon>
        <taxon>Craniata</taxon>
        <taxon>Vertebrata</taxon>
        <taxon>Euteleostomi</taxon>
        <taxon>Mammalia</taxon>
        <taxon>Eutheria</taxon>
        <taxon>Euarchontoglires</taxon>
        <taxon>Glires</taxon>
        <taxon>Rodentia</taxon>
        <taxon>Myomorpha</taxon>
        <taxon>Muroidea</taxon>
        <taxon>Muridae</taxon>
        <taxon>Murinae</taxon>
        <taxon>Mus</taxon>
        <taxon>Mus</taxon>
    </lineage>
</organism>
<protein>
    <recommendedName>
        <fullName evidence="9">ATP synthase F(1) complex catalytic subunit beta, mitochondrial</fullName>
        <ecNumber evidence="8">7.1.2.2</ecNumber>
    </recommendedName>
    <alternativeName>
        <fullName evidence="3">ATP synthase F1 subunit beta</fullName>
    </alternativeName>
</protein>
<keyword id="KW-0007">Acetylation</keyword>
<keyword id="KW-0066">ATP synthesis</keyword>
<keyword id="KW-0067">ATP-binding</keyword>
<keyword id="KW-0139">CF(1)</keyword>
<keyword id="KW-0903">Direct protein sequencing</keyword>
<keyword id="KW-0325">Glycoprotein</keyword>
<keyword id="KW-0375">Hydrogen ion transport</keyword>
<keyword id="KW-0406">Ion transport</keyword>
<keyword id="KW-0460">Magnesium</keyword>
<keyword id="KW-0472">Membrane</keyword>
<keyword id="KW-0479">Metal-binding</keyword>
<keyword id="KW-0496">Mitochondrion</keyword>
<keyword id="KW-0999">Mitochondrion inner membrane</keyword>
<keyword id="KW-0547">Nucleotide-binding</keyword>
<keyword id="KW-0597">Phosphoprotein</keyword>
<keyword id="KW-1185">Reference proteome</keyword>
<keyword id="KW-0809">Transit peptide</keyword>
<keyword id="KW-1278">Translocase</keyword>
<keyword id="KW-0813">Transport</keyword>